<organism>
    <name type="scientific">Lactiplantibacillus plantarum (strain ATCC BAA-793 / NCIMB 8826 / WCFS1)</name>
    <name type="common">Lactobacillus plantarum</name>
    <dbReference type="NCBI Taxonomy" id="220668"/>
    <lineage>
        <taxon>Bacteria</taxon>
        <taxon>Bacillati</taxon>
        <taxon>Bacillota</taxon>
        <taxon>Bacilli</taxon>
        <taxon>Lactobacillales</taxon>
        <taxon>Lactobacillaceae</taxon>
        <taxon>Lactiplantibacillus</taxon>
    </lineage>
</organism>
<evidence type="ECO:0000250" key="1"/>
<evidence type="ECO:0000305" key="2"/>
<reference key="1">
    <citation type="journal article" date="1996" name="Gene">
        <title>Structure and organisation of the pyrimidine biosynthesis pathway genes in Lactobacillus plantarum: a PCR strategy for sequencing without cloning.</title>
        <authorList>
            <person name="Elagoez A."/>
            <person name="Abdi A."/>
            <person name="Hubert J.-C."/>
            <person name="Kammerer B."/>
        </authorList>
    </citation>
    <scope>NUCLEOTIDE SEQUENCE [GENOMIC DNA]</scope>
    <source>
        <strain>ATCC 8014 / CCM 1904 / DSM 20205 / NCDO 82 / NCIB 6376</strain>
    </source>
</reference>
<reference key="2">
    <citation type="submission" date="2003-12" db="EMBL/GenBank/DDBJ databases">
        <authorList>
            <person name="Kammerer B."/>
            <person name="Elagoz A."/>
            <person name="Abdi A."/>
            <person name="Hubert J.-C."/>
            <person name="Bringel F."/>
        </authorList>
    </citation>
    <scope>SEQUENCE REVISION</scope>
</reference>
<reference key="3">
    <citation type="journal article" date="2003" name="Proc. Natl. Acad. Sci. U.S.A.">
        <title>Complete genome sequence of Lactobacillus plantarum WCFS1.</title>
        <authorList>
            <person name="Kleerebezem M."/>
            <person name="Boekhorst J."/>
            <person name="van Kranenburg R."/>
            <person name="Molenaar D."/>
            <person name="Kuipers O.P."/>
            <person name="Leer R."/>
            <person name="Tarchini R."/>
            <person name="Peters S.A."/>
            <person name="Sandbrink H.M."/>
            <person name="Fiers M.W.E.J."/>
            <person name="Stiekema W."/>
            <person name="Klein Lankhorst R.M."/>
            <person name="Bron P.A."/>
            <person name="Hoffer S.M."/>
            <person name="Nierop Groot M.N."/>
            <person name="Kerkhoven R."/>
            <person name="De Vries M."/>
            <person name="Ursing B."/>
            <person name="De Vos W.M."/>
            <person name="Siezen R.J."/>
        </authorList>
    </citation>
    <scope>NUCLEOTIDE SEQUENCE [LARGE SCALE GENOMIC DNA]</scope>
    <source>
        <strain>ATCC BAA-793 / NCIMB 8826 / WCFS1</strain>
    </source>
</reference>
<reference key="4">
    <citation type="journal article" date="2012" name="J. Bacteriol.">
        <title>Complete resequencing and reannotation of the Lactobacillus plantarum WCFS1 genome.</title>
        <authorList>
            <person name="Siezen R.J."/>
            <person name="Francke C."/>
            <person name="Renckens B."/>
            <person name="Boekhorst J."/>
            <person name="Wels M."/>
            <person name="Kleerebezem M."/>
            <person name="van Hijum S.A."/>
        </authorList>
    </citation>
    <scope>NUCLEOTIDE SEQUENCE [LARGE SCALE GENOMIC DNA]</scope>
    <scope>GENOME REANNOTATION</scope>
    <source>
        <strain>ATCC BAA-793 / NCIMB 8826 / WCFS1</strain>
    </source>
</reference>
<sequence length="305" mass="31224">MGRLTVNLAGVTFKNPVMPASGTAAYGQQMAQQLDLSALGGLVIKSTTAEPKAGNPRPTTAETTAGWLNAIGLKNPGIDNVLADKLPWLATHYPDLPIIGSVAGASFDEYVAVARKMASAPNVKLLEINISCPNVDHGGLAFGTDPATVTALTKAIVAAVDKPVFMKLTPNVTDIVPIALAAEAGGAAGLTMINTLTGMGIDLATRQPILAHGTGGLSGKAIHPLAVRMIHDVRQHTKLPIIGVGGVFTPADVLEFYLAGANAVQVGAATYGHPTACTDIIAGLPAAMDQYGITSLQALIQEVQG</sequence>
<feature type="chain" id="PRO_0000148397" description="Dihydroorotate dehydrogenase A (fumarate)">
    <location>
        <begin position="1"/>
        <end position="305"/>
    </location>
</feature>
<feature type="active site" description="Nucleophile">
    <location>
        <position position="132"/>
    </location>
</feature>
<feature type="binding site" evidence="1">
    <location>
        <position position="21"/>
    </location>
    <ligand>
        <name>FMN</name>
        <dbReference type="ChEBI" id="CHEBI:58210"/>
    </ligand>
</feature>
<feature type="binding site" evidence="1">
    <location>
        <begin position="45"/>
        <end position="46"/>
    </location>
    <ligand>
        <name>FMN</name>
        <dbReference type="ChEBI" id="CHEBI:58210"/>
    </ligand>
</feature>
<feature type="binding site" evidence="1">
    <location>
        <position position="45"/>
    </location>
    <ligand>
        <name>substrate</name>
    </ligand>
</feature>
<feature type="binding site" evidence="1">
    <location>
        <begin position="69"/>
        <end position="73"/>
    </location>
    <ligand>
        <name>substrate</name>
    </ligand>
</feature>
<feature type="binding site" evidence="1">
    <location>
        <position position="129"/>
    </location>
    <ligand>
        <name>FMN</name>
        <dbReference type="ChEBI" id="CHEBI:58210"/>
    </ligand>
</feature>
<feature type="binding site" evidence="1">
    <location>
        <position position="129"/>
    </location>
    <ligand>
        <name>substrate</name>
    </ligand>
</feature>
<feature type="binding site" evidence="1">
    <location>
        <position position="167"/>
    </location>
    <ligand>
        <name>FMN</name>
        <dbReference type="ChEBI" id="CHEBI:58210"/>
    </ligand>
</feature>
<feature type="binding site" evidence="1">
    <location>
        <position position="193"/>
    </location>
    <ligand>
        <name>FMN</name>
        <dbReference type="ChEBI" id="CHEBI:58210"/>
    </ligand>
</feature>
<feature type="binding site" evidence="1">
    <location>
        <begin position="194"/>
        <end position="195"/>
    </location>
    <ligand>
        <name>substrate</name>
    </ligand>
</feature>
<feature type="binding site" evidence="1">
    <location>
        <position position="219"/>
    </location>
    <ligand>
        <name>FMN</name>
        <dbReference type="ChEBI" id="CHEBI:58210"/>
    </ligand>
</feature>
<feature type="binding site" evidence="1">
    <location>
        <begin position="245"/>
        <end position="246"/>
    </location>
    <ligand>
        <name>FMN</name>
        <dbReference type="ChEBI" id="CHEBI:58210"/>
    </ligand>
</feature>
<protein>
    <recommendedName>
        <fullName>Dihydroorotate dehydrogenase A (fumarate)</fullName>
        <shortName>DHOD A</shortName>
        <shortName>DHODase A</shortName>
        <shortName>DHOdehase A</shortName>
        <ecNumber>1.3.98.1</ecNumber>
    </recommendedName>
</protein>
<name>PYRDA_LACPL</name>
<gene>
    <name type="primary">pyrD</name>
    <name type="ordered locus">lp_2699</name>
</gene>
<proteinExistence type="inferred from homology"/>
<comment type="function">
    <text evidence="1">Catalyzes the conversion of dihydroorotate to orotate with fumarate as the electron acceptor.</text>
</comment>
<comment type="catalytic activity">
    <reaction>
        <text>(S)-dihydroorotate + fumarate = orotate + succinate</text>
        <dbReference type="Rhea" id="RHEA:30059"/>
        <dbReference type="ChEBI" id="CHEBI:29806"/>
        <dbReference type="ChEBI" id="CHEBI:30031"/>
        <dbReference type="ChEBI" id="CHEBI:30839"/>
        <dbReference type="ChEBI" id="CHEBI:30864"/>
        <dbReference type="EC" id="1.3.98.1"/>
    </reaction>
</comment>
<comment type="cofactor">
    <cofactor evidence="1">
        <name>FMN</name>
        <dbReference type="ChEBI" id="CHEBI:58210"/>
    </cofactor>
    <text evidence="1">Binds 1 FMN per subunit.</text>
</comment>
<comment type="pathway">
    <text>Pyrimidine metabolism; UMP biosynthesis via de novo pathway.</text>
</comment>
<comment type="subunit">
    <text evidence="1">Homodimer.</text>
</comment>
<comment type="subcellular location">
    <subcellularLocation>
        <location evidence="1">Cytoplasm</location>
    </subcellularLocation>
</comment>
<comment type="similarity">
    <text evidence="2">Belongs to the dihydroorotate dehydrogenase family. Type 1 subfamily.</text>
</comment>
<keyword id="KW-0963">Cytoplasm</keyword>
<keyword id="KW-0285">Flavoprotein</keyword>
<keyword id="KW-0288">FMN</keyword>
<keyword id="KW-0560">Oxidoreductase</keyword>
<keyword id="KW-0665">Pyrimidine biosynthesis</keyword>
<keyword id="KW-1185">Reference proteome</keyword>
<dbReference type="EC" id="1.3.98.1"/>
<dbReference type="EMBL" id="Z54240">
    <property type="protein sequence ID" value="CAA91006.2"/>
    <property type="molecule type" value="Genomic_DNA"/>
</dbReference>
<dbReference type="EMBL" id="AL935263">
    <property type="protein sequence ID" value="CCC79820.1"/>
    <property type="molecule type" value="Genomic_DNA"/>
</dbReference>
<dbReference type="RefSeq" id="WP_003645881.1">
    <property type="nucleotide sequence ID" value="NC_004567.2"/>
</dbReference>
<dbReference type="RefSeq" id="YP_004890334.1">
    <property type="nucleotide sequence ID" value="NC_004567.2"/>
</dbReference>
<dbReference type="SMR" id="P77887"/>
<dbReference type="STRING" id="220668.lp_2699"/>
<dbReference type="EnsemblBacteria" id="CCC79820">
    <property type="protein sequence ID" value="CCC79820"/>
    <property type="gene ID" value="lp_2699"/>
</dbReference>
<dbReference type="KEGG" id="lpl:lp_2699"/>
<dbReference type="PATRIC" id="fig|220668.9.peg.2259"/>
<dbReference type="eggNOG" id="COG0167">
    <property type="taxonomic scope" value="Bacteria"/>
</dbReference>
<dbReference type="HOGENOM" id="CLU_042042_0_0_9"/>
<dbReference type="OrthoDB" id="9794954at2"/>
<dbReference type="PhylomeDB" id="P77887"/>
<dbReference type="UniPathway" id="UPA00070"/>
<dbReference type="Proteomes" id="UP000000432">
    <property type="component" value="Chromosome"/>
</dbReference>
<dbReference type="GO" id="GO:0005737">
    <property type="term" value="C:cytoplasm"/>
    <property type="evidence" value="ECO:0007669"/>
    <property type="project" value="UniProtKB-SubCell"/>
</dbReference>
<dbReference type="GO" id="GO:1990663">
    <property type="term" value="F:dihydroorotate dehydrogenase (fumarate) activity"/>
    <property type="evidence" value="ECO:0007669"/>
    <property type="project" value="UniProtKB-EC"/>
</dbReference>
<dbReference type="GO" id="GO:0006207">
    <property type="term" value="P:'de novo' pyrimidine nucleobase biosynthetic process"/>
    <property type="evidence" value="ECO:0007669"/>
    <property type="project" value="InterPro"/>
</dbReference>
<dbReference type="GO" id="GO:0044205">
    <property type="term" value="P:'de novo' UMP biosynthetic process"/>
    <property type="evidence" value="ECO:0007669"/>
    <property type="project" value="UniProtKB-UniRule"/>
</dbReference>
<dbReference type="CDD" id="cd04740">
    <property type="entry name" value="DHOD_1B_like"/>
    <property type="match status" value="1"/>
</dbReference>
<dbReference type="FunFam" id="3.20.20.70:FF:000027">
    <property type="entry name" value="Dihydropyrimidine dehydrogenase [NADP(+)]"/>
    <property type="match status" value="1"/>
</dbReference>
<dbReference type="Gene3D" id="3.20.20.70">
    <property type="entry name" value="Aldolase class I"/>
    <property type="match status" value="1"/>
</dbReference>
<dbReference type="HAMAP" id="MF_00224">
    <property type="entry name" value="DHO_dh_type1"/>
    <property type="match status" value="1"/>
</dbReference>
<dbReference type="InterPro" id="IPR013785">
    <property type="entry name" value="Aldolase_TIM"/>
</dbReference>
<dbReference type="InterPro" id="IPR050074">
    <property type="entry name" value="DHO_dehydrogenase"/>
</dbReference>
<dbReference type="InterPro" id="IPR033888">
    <property type="entry name" value="DHOD_1B"/>
</dbReference>
<dbReference type="InterPro" id="IPR024920">
    <property type="entry name" value="Dihydroorotate_DH_1"/>
</dbReference>
<dbReference type="InterPro" id="IPR012135">
    <property type="entry name" value="Dihydroorotate_DH_1_2"/>
</dbReference>
<dbReference type="InterPro" id="IPR005720">
    <property type="entry name" value="Dihydroorotate_DH_cat"/>
</dbReference>
<dbReference type="InterPro" id="IPR001295">
    <property type="entry name" value="Dihydroorotate_DH_CS"/>
</dbReference>
<dbReference type="InterPro" id="IPR049622">
    <property type="entry name" value="Dihydroorotate_DH_I"/>
</dbReference>
<dbReference type="NCBIfam" id="NF005574">
    <property type="entry name" value="PRK07259.1"/>
    <property type="match status" value="1"/>
</dbReference>
<dbReference type="NCBIfam" id="TIGR01037">
    <property type="entry name" value="pyrD_sub1_fam"/>
    <property type="match status" value="1"/>
</dbReference>
<dbReference type="PANTHER" id="PTHR48109:SF1">
    <property type="entry name" value="DIHYDROOROTATE DEHYDROGENASE (FUMARATE)"/>
    <property type="match status" value="1"/>
</dbReference>
<dbReference type="PANTHER" id="PTHR48109">
    <property type="entry name" value="DIHYDROOROTATE DEHYDROGENASE (QUINONE), MITOCHONDRIAL-RELATED"/>
    <property type="match status" value="1"/>
</dbReference>
<dbReference type="Pfam" id="PF01180">
    <property type="entry name" value="DHO_dh"/>
    <property type="match status" value="1"/>
</dbReference>
<dbReference type="PIRSF" id="PIRSF000164">
    <property type="entry name" value="DHO_oxidase"/>
    <property type="match status" value="1"/>
</dbReference>
<dbReference type="SUPFAM" id="SSF51395">
    <property type="entry name" value="FMN-linked oxidoreductases"/>
    <property type="match status" value="1"/>
</dbReference>
<dbReference type="PROSITE" id="PS00911">
    <property type="entry name" value="DHODEHASE_1"/>
    <property type="match status" value="1"/>
</dbReference>
<dbReference type="PROSITE" id="PS00912">
    <property type="entry name" value="DHODEHASE_2"/>
    <property type="match status" value="1"/>
</dbReference>
<accession>P77887</accession>
<accession>F9URI1</accession>